<evidence type="ECO:0000255" key="1">
    <source>
        <dbReference type="HAMAP-Rule" id="MF_00375"/>
    </source>
</evidence>
<comment type="catalytic activity">
    <reaction evidence="1">
        <text>(S)-4-amino-5-oxopentanoate = 5-aminolevulinate</text>
        <dbReference type="Rhea" id="RHEA:14265"/>
        <dbReference type="ChEBI" id="CHEBI:57501"/>
        <dbReference type="ChEBI" id="CHEBI:356416"/>
        <dbReference type="EC" id="5.4.3.8"/>
    </reaction>
</comment>
<comment type="cofactor">
    <cofactor evidence="1">
        <name>pyridoxal 5'-phosphate</name>
        <dbReference type="ChEBI" id="CHEBI:597326"/>
    </cofactor>
</comment>
<comment type="pathway">
    <text evidence="1">Porphyrin-containing compound metabolism; protoporphyrin-IX biosynthesis; 5-aminolevulinate from L-glutamyl-tRNA(Glu): step 2/2.</text>
</comment>
<comment type="pathway">
    <text evidence="1">Porphyrin-containing compound metabolism; chlorophyll biosynthesis.</text>
</comment>
<comment type="subunit">
    <text evidence="1">Homodimer.</text>
</comment>
<comment type="subcellular location">
    <subcellularLocation>
        <location evidence="1">Cytoplasm</location>
    </subcellularLocation>
</comment>
<comment type="similarity">
    <text evidence="1">Belongs to the class-III pyridoxal-phosphate-dependent aminotransferase family. HemL subfamily.</text>
</comment>
<reference key="1">
    <citation type="submission" date="2006-12" db="EMBL/GenBank/DDBJ databases">
        <title>Complete sequence of Chlorobium phaeobacteroides DSM 266.</title>
        <authorList>
            <consortium name="US DOE Joint Genome Institute"/>
            <person name="Copeland A."/>
            <person name="Lucas S."/>
            <person name="Lapidus A."/>
            <person name="Barry K."/>
            <person name="Detter J.C."/>
            <person name="Glavina del Rio T."/>
            <person name="Hammon N."/>
            <person name="Israni S."/>
            <person name="Pitluck S."/>
            <person name="Goltsman E."/>
            <person name="Schmutz J."/>
            <person name="Larimer F."/>
            <person name="Land M."/>
            <person name="Hauser L."/>
            <person name="Mikhailova N."/>
            <person name="Li T."/>
            <person name="Overmann J."/>
            <person name="Bryant D.A."/>
            <person name="Richardson P."/>
        </authorList>
    </citation>
    <scope>NUCLEOTIDE SEQUENCE [LARGE SCALE GENOMIC DNA]</scope>
    <source>
        <strain>DSM 266 / SMG 266 / 2430</strain>
    </source>
</reference>
<keyword id="KW-0149">Chlorophyll biosynthesis</keyword>
<keyword id="KW-0963">Cytoplasm</keyword>
<keyword id="KW-0413">Isomerase</keyword>
<keyword id="KW-0627">Porphyrin biosynthesis</keyword>
<keyword id="KW-0663">Pyridoxal phosphate</keyword>
<keyword id="KW-1185">Reference proteome</keyword>
<sequence>MLQHTKSAELFEKAKQFIPGGVNSPVRAFKSVGGTPIYMAKGRGAYLTDVDGNSYLDYVGSWGPFILGSMHPRITAALEYTLKNIGTSFGTPIEMEIEIAELLCKIVPSLEMVRMVNSGTEATMSAVRLARGYTGRDKIIKFEGCYHGHGDSFLIKAGSGALTLGAPDSPGVTKGTALDTLNATYNDIESVKLLVEENKNNIAAIIIEPVAGNTGVIPAKPGFLADLRNLCDQNGIVLIFDEVMCGFRVALGGAQSLYGVTPDLTTMGKIIGGGLPVGAFGGKRKIMERVAPLGDVYQAGTLSGNPLALTAGLETLKILMDENPYPELERKAAILEAGFRDNMQKLGLNFVQNRVGSMACLFFTETPVESYASAITADIRKYGKYFHSMLEQGIYLAPSQFEAMFTSSMHTDEDLDKTIKANFNALQIACS</sequence>
<accession>A1BJG8</accession>
<dbReference type="EC" id="5.4.3.8" evidence="1"/>
<dbReference type="EMBL" id="CP000492">
    <property type="protein sequence ID" value="ABL66545.1"/>
    <property type="molecule type" value="Genomic_DNA"/>
</dbReference>
<dbReference type="RefSeq" id="WP_011746322.1">
    <property type="nucleotide sequence ID" value="NC_008639.1"/>
</dbReference>
<dbReference type="SMR" id="A1BJG8"/>
<dbReference type="STRING" id="290317.Cpha266_2557"/>
<dbReference type="KEGG" id="cph:Cpha266_2557"/>
<dbReference type="eggNOG" id="COG0001">
    <property type="taxonomic scope" value="Bacteria"/>
</dbReference>
<dbReference type="HOGENOM" id="CLU_016922_1_5_10"/>
<dbReference type="OrthoDB" id="9807885at2"/>
<dbReference type="UniPathway" id="UPA00251">
    <property type="reaction ID" value="UER00317"/>
</dbReference>
<dbReference type="UniPathway" id="UPA00668"/>
<dbReference type="Proteomes" id="UP000008701">
    <property type="component" value="Chromosome"/>
</dbReference>
<dbReference type="GO" id="GO:0005737">
    <property type="term" value="C:cytoplasm"/>
    <property type="evidence" value="ECO:0007669"/>
    <property type="project" value="UniProtKB-SubCell"/>
</dbReference>
<dbReference type="GO" id="GO:0042286">
    <property type="term" value="F:glutamate-1-semialdehyde 2,1-aminomutase activity"/>
    <property type="evidence" value="ECO:0007669"/>
    <property type="project" value="UniProtKB-UniRule"/>
</dbReference>
<dbReference type="GO" id="GO:0030170">
    <property type="term" value="F:pyridoxal phosphate binding"/>
    <property type="evidence" value="ECO:0007669"/>
    <property type="project" value="InterPro"/>
</dbReference>
<dbReference type="GO" id="GO:0008483">
    <property type="term" value="F:transaminase activity"/>
    <property type="evidence" value="ECO:0007669"/>
    <property type="project" value="InterPro"/>
</dbReference>
<dbReference type="GO" id="GO:0015995">
    <property type="term" value="P:chlorophyll biosynthetic process"/>
    <property type="evidence" value="ECO:0007669"/>
    <property type="project" value="UniProtKB-UniRule"/>
</dbReference>
<dbReference type="GO" id="GO:0006782">
    <property type="term" value="P:protoporphyrinogen IX biosynthetic process"/>
    <property type="evidence" value="ECO:0007669"/>
    <property type="project" value="UniProtKB-UniRule"/>
</dbReference>
<dbReference type="CDD" id="cd00610">
    <property type="entry name" value="OAT_like"/>
    <property type="match status" value="1"/>
</dbReference>
<dbReference type="FunFam" id="3.40.640.10:FF:000021">
    <property type="entry name" value="Glutamate-1-semialdehyde 2,1-aminomutase"/>
    <property type="match status" value="1"/>
</dbReference>
<dbReference type="Gene3D" id="3.90.1150.10">
    <property type="entry name" value="Aspartate Aminotransferase, domain 1"/>
    <property type="match status" value="1"/>
</dbReference>
<dbReference type="Gene3D" id="3.40.640.10">
    <property type="entry name" value="Type I PLP-dependent aspartate aminotransferase-like (Major domain)"/>
    <property type="match status" value="1"/>
</dbReference>
<dbReference type="HAMAP" id="MF_00375">
    <property type="entry name" value="HemL_aminotrans_3"/>
    <property type="match status" value="1"/>
</dbReference>
<dbReference type="InterPro" id="IPR004639">
    <property type="entry name" value="4pyrrol_synth_GluAld_NH2Trfase"/>
</dbReference>
<dbReference type="InterPro" id="IPR005814">
    <property type="entry name" value="Aminotrans_3"/>
</dbReference>
<dbReference type="InterPro" id="IPR049704">
    <property type="entry name" value="Aminotrans_3_PPA_site"/>
</dbReference>
<dbReference type="InterPro" id="IPR015424">
    <property type="entry name" value="PyrdxlP-dep_Trfase"/>
</dbReference>
<dbReference type="InterPro" id="IPR015421">
    <property type="entry name" value="PyrdxlP-dep_Trfase_major"/>
</dbReference>
<dbReference type="InterPro" id="IPR015422">
    <property type="entry name" value="PyrdxlP-dep_Trfase_small"/>
</dbReference>
<dbReference type="NCBIfam" id="TIGR00713">
    <property type="entry name" value="hemL"/>
    <property type="match status" value="1"/>
</dbReference>
<dbReference type="NCBIfam" id="NF000818">
    <property type="entry name" value="PRK00062.1"/>
    <property type="match status" value="1"/>
</dbReference>
<dbReference type="PANTHER" id="PTHR43713">
    <property type="entry name" value="GLUTAMATE-1-SEMIALDEHYDE 2,1-AMINOMUTASE"/>
    <property type="match status" value="1"/>
</dbReference>
<dbReference type="PANTHER" id="PTHR43713:SF3">
    <property type="entry name" value="GLUTAMATE-1-SEMIALDEHYDE 2,1-AMINOMUTASE 1, CHLOROPLASTIC-RELATED"/>
    <property type="match status" value="1"/>
</dbReference>
<dbReference type="Pfam" id="PF00202">
    <property type="entry name" value="Aminotran_3"/>
    <property type="match status" value="1"/>
</dbReference>
<dbReference type="SUPFAM" id="SSF53383">
    <property type="entry name" value="PLP-dependent transferases"/>
    <property type="match status" value="1"/>
</dbReference>
<dbReference type="PROSITE" id="PS00600">
    <property type="entry name" value="AA_TRANSFER_CLASS_3"/>
    <property type="match status" value="1"/>
</dbReference>
<organism>
    <name type="scientific">Chlorobium phaeobacteroides (strain DSM 266 / SMG 266 / 2430)</name>
    <dbReference type="NCBI Taxonomy" id="290317"/>
    <lineage>
        <taxon>Bacteria</taxon>
        <taxon>Pseudomonadati</taxon>
        <taxon>Chlorobiota</taxon>
        <taxon>Chlorobiia</taxon>
        <taxon>Chlorobiales</taxon>
        <taxon>Chlorobiaceae</taxon>
        <taxon>Chlorobium/Pelodictyon group</taxon>
        <taxon>Chlorobium</taxon>
    </lineage>
</organism>
<feature type="chain" id="PRO_0000300901" description="Glutamate-1-semialdehyde 2,1-aminomutase">
    <location>
        <begin position="1"/>
        <end position="431"/>
    </location>
</feature>
<feature type="modified residue" description="N6-(pyridoxal phosphate)lysine" evidence="1">
    <location>
        <position position="269"/>
    </location>
</feature>
<name>GSA_CHLPD</name>
<proteinExistence type="inferred from homology"/>
<protein>
    <recommendedName>
        <fullName evidence="1">Glutamate-1-semialdehyde 2,1-aminomutase</fullName>
        <shortName evidence="1">GSA</shortName>
        <ecNumber evidence="1">5.4.3.8</ecNumber>
    </recommendedName>
    <alternativeName>
        <fullName evidence="1">Glutamate-1-semialdehyde aminotransferase</fullName>
        <shortName evidence="1">GSA-AT</shortName>
    </alternativeName>
</protein>
<gene>
    <name evidence="1" type="primary">hemL</name>
    <name type="ordered locus">Cpha266_2557</name>
</gene>